<gene>
    <name type="primary">dnr-8</name>
    <name evidence="1" type="synonym">fen1</name>
    <name type="ORF">NCU10776</name>
</gene>
<protein>
    <recommendedName>
        <fullName evidence="1">Flap endonuclease 1</fullName>
        <shortName evidence="1">FEN-1</shortName>
        <ecNumber evidence="1">3.1.-.-</ecNumber>
    </recommendedName>
    <alternativeName>
        <fullName>DNA repair protein 8</fullName>
    </alternativeName>
    <alternativeName>
        <fullName evidence="1">Flap structure-specific endonuclease 1</fullName>
    </alternativeName>
</protein>
<organism>
    <name type="scientific">Neurospora crassa (strain ATCC 24698 / 74-OR23-1A / CBS 708.71 / DSM 1257 / FGSC 987)</name>
    <dbReference type="NCBI Taxonomy" id="367110"/>
    <lineage>
        <taxon>Eukaryota</taxon>
        <taxon>Fungi</taxon>
        <taxon>Dikarya</taxon>
        <taxon>Ascomycota</taxon>
        <taxon>Pezizomycotina</taxon>
        <taxon>Sordariomycetes</taxon>
        <taxon>Sordariomycetidae</taxon>
        <taxon>Sordariales</taxon>
        <taxon>Sordariaceae</taxon>
        <taxon>Neurospora</taxon>
    </lineage>
</organism>
<keyword id="KW-0227">DNA damage</keyword>
<keyword id="KW-0234">DNA repair</keyword>
<keyword id="KW-0235">DNA replication</keyword>
<keyword id="KW-0255">Endonuclease</keyword>
<keyword id="KW-0269">Exonuclease</keyword>
<keyword id="KW-0378">Hydrolase</keyword>
<keyword id="KW-0460">Magnesium</keyword>
<keyword id="KW-0479">Metal-binding</keyword>
<keyword id="KW-0496">Mitochondrion</keyword>
<keyword id="KW-0540">Nuclease</keyword>
<keyword id="KW-0539">Nucleus</keyword>
<keyword id="KW-0597">Phosphoprotein</keyword>
<keyword id="KW-1185">Reference proteome</keyword>
<name>FEN1_NEUCR</name>
<evidence type="ECO:0000255" key="1">
    <source>
        <dbReference type="HAMAP-Rule" id="MF_03140"/>
    </source>
</evidence>
<evidence type="ECO:0000256" key="2">
    <source>
        <dbReference type="SAM" id="MobiDB-lite"/>
    </source>
</evidence>
<proteinExistence type="inferred from homology"/>
<sequence>MGIKQLFSVIKDEAPDAIKEGEIKNQFGRKVAIDASMSIYSFLIAVRSDGQQLMNEAGETTSHLMGMFYRTLRMVDNGIKPLYVFDGAPPKLKSGELAKRFQRKQEATEGLEEAKETGTAEDVEKFSRRTVRVTREHNAECQKLLKLMGIPYIVAPTEAEAQCAVLARAGKVYAAASEDMDTLCFNAPILLRHLTFSEQRKEPIQEIHLEKVLEGLGMERKQFIDLCILLGCDYLDPIPKVGPSTALKLIREHGTLEKVVEWMKADPKGRYQIPEDWPFEDARTLFFEPDVRPADDPLCDFKWDKPDIEGLIQFLVHEKGFSEDRVRSAGTKLEKNMKTSQQARIEGFFKILPKTEEEKKAHKRKLEEQAEQKRKKVKEEKKEKAKLKAKPRGA</sequence>
<reference key="1">
    <citation type="journal article" date="2003" name="Nature">
        <title>The genome sequence of the filamentous fungus Neurospora crassa.</title>
        <authorList>
            <person name="Galagan J.E."/>
            <person name="Calvo S.E."/>
            <person name="Borkovich K.A."/>
            <person name="Selker E.U."/>
            <person name="Read N.D."/>
            <person name="Jaffe D.B."/>
            <person name="FitzHugh W."/>
            <person name="Ma L.-J."/>
            <person name="Smirnov S."/>
            <person name="Purcell S."/>
            <person name="Rehman B."/>
            <person name="Elkins T."/>
            <person name="Engels R."/>
            <person name="Wang S."/>
            <person name="Nielsen C.B."/>
            <person name="Butler J."/>
            <person name="Endrizzi M."/>
            <person name="Qui D."/>
            <person name="Ianakiev P."/>
            <person name="Bell-Pedersen D."/>
            <person name="Nelson M.A."/>
            <person name="Werner-Washburne M."/>
            <person name="Selitrennikoff C.P."/>
            <person name="Kinsey J.A."/>
            <person name="Braun E.L."/>
            <person name="Zelter A."/>
            <person name="Schulte U."/>
            <person name="Kothe G.O."/>
            <person name="Jedd G."/>
            <person name="Mewes H.-W."/>
            <person name="Staben C."/>
            <person name="Marcotte E."/>
            <person name="Greenberg D."/>
            <person name="Roy A."/>
            <person name="Foley K."/>
            <person name="Naylor J."/>
            <person name="Stange-Thomann N."/>
            <person name="Barrett R."/>
            <person name="Gnerre S."/>
            <person name="Kamal M."/>
            <person name="Kamvysselis M."/>
            <person name="Mauceli E.W."/>
            <person name="Bielke C."/>
            <person name="Rudd S."/>
            <person name="Frishman D."/>
            <person name="Krystofova S."/>
            <person name="Rasmussen C."/>
            <person name="Metzenberg R.L."/>
            <person name="Perkins D.D."/>
            <person name="Kroken S."/>
            <person name="Cogoni C."/>
            <person name="Macino G."/>
            <person name="Catcheside D.E.A."/>
            <person name="Li W."/>
            <person name="Pratt R.J."/>
            <person name="Osmani S.A."/>
            <person name="DeSouza C.P.C."/>
            <person name="Glass N.L."/>
            <person name="Orbach M.J."/>
            <person name="Berglund J.A."/>
            <person name="Voelker R."/>
            <person name="Yarden O."/>
            <person name="Plamann M."/>
            <person name="Seiler S."/>
            <person name="Dunlap J.C."/>
            <person name="Radford A."/>
            <person name="Aramayo R."/>
            <person name="Natvig D.O."/>
            <person name="Alex L.A."/>
            <person name="Mannhaupt G."/>
            <person name="Ebbole D.J."/>
            <person name="Freitag M."/>
            <person name="Paulsen I."/>
            <person name="Sachs M.S."/>
            <person name="Lander E.S."/>
            <person name="Nusbaum C."/>
            <person name="Birren B.W."/>
        </authorList>
    </citation>
    <scope>NUCLEOTIDE SEQUENCE [LARGE SCALE GENOMIC DNA]</scope>
    <source>
        <strain>ATCC 24698 / 74-OR23-1A / CBS 708.71 / DSM 1257 / FGSC 987</strain>
    </source>
</reference>
<feature type="chain" id="PRO_0000403588" description="Flap endonuclease 1">
    <location>
        <begin position="1"/>
        <end position="394"/>
    </location>
</feature>
<feature type="region of interest" description="N-domain">
    <location>
        <begin position="1"/>
        <end position="104"/>
    </location>
</feature>
<feature type="region of interest" description="I-domain">
    <location>
        <begin position="122"/>
        <end position="253"/>
    </location>
</feature>
<feature type="region of interest" description="Interaction with PCNA" evidence="1">
    <location>
        <begin position="341"/>
        <end position="349"/>
    </location>
</feature>
<feature type="region of interest" description="Disordered" evidence="2">
    <location>
        <begin position="356"/>
        <end position="394"/>
    </location>
</feature>
<feature type="compositionally biased region" description="Basic and acidic residues" evidence="2">
    <location>
        <begin position="356"/>
        <end position="383"/>
    </location>
</feature>
<feature type="compositionally biased region" description="Basic residues" evidence="2">
    <location>
        <begin position="384"/>
        <end position="394"/>
    </location>
</feature>
<feature type="binding site" evidence="1">
    <location>
        <position position="34"/>
    </location>
    <ligand>
        <name>Mg(2+)</name>
        <dbReference type="ChEBI" id="CHEBI:18420"/>
        <label>1</label>
    </ligand>
</feature>
<feature type="binding site" evidence="1">
    <location>
        <position position="47"/>
    </location>
    <ligand>
        <name>DNA</name>
        <dbReference type="ChEBI" id="CHEBI:16991"/>
    </ligand>
</feature>
<feature type="binding site" evidence="1">
    <location>
        <position position="70"/>
    </location>
    <ligand>
        <name>DNA</name>
        <dbReference type="ChEBI" id="CHEBI:16991"/>
    </ligand>
</feature>
<feature type="binding site" evidence="1">
    <location>
        <position position="86"/>
    </location>
    <ligand>
        <name>Mg(2+)</name>
        <dbReference type="ChEBI" id="CHEBI:18420"/>
        <label>1</label>
    </ligand>
</feature>
<feature type="binding site" evidence="1">
    <location>
        <position position="158"/>
    </location>
    <ligand>
        <name>DNA</name>
        <dbReference type="ChEBI" id="CHEBI:16991"/>
    </ligand>
</feature>
<feature type="binding site" evidence="1">
    <location>
        <position position="158"/>
    </location>
    <ligand>
        <name>Mg(2+)</name>
        <dbReference type="ChEBI" id="CHEBI:18420"/>
        <label>1</label>
    </ligand>
</feature>
<feature type="binding site" evidence="1">
    <location>
        <position position="160"/>
    </location>
    <ligand>
        <name>Mg(2+)</name>
        <dbReference type="ChEBI" id="CHEBI:18420"/>
        <label>1</label>
    </ligand>
</feature>
<feature type="binding site" evidence="1">
    <location>
        <position position="179"/>
    </location>
    <ligand>
        <name>Mg(2+)</name>
        <dbReference type="ChEBI" id="CHEBI:18420"/>
        <label>2</label>
    </ligand>
</feature>
<feature type="binding site" evidence="1">
    <location>
        <position position="181"/>
    </location>
    <ligand>
        <name>Mg(2+)</name>
        <dbReference type="ChEBI" id="CHEBI:18420"/>
        <label>2</label>
    </ligand>
</feature>
<feature type="binding site" evidence="1">
    <location>
        <position position="231"/>
    </location>
    <ligand>
        <name>DNA</name>
        <dbReference type="ChEBI" id="CHEBI:16991"/>
    </ligand>
</feature>
<feature type="binding site" evidence="1">
    <location>
        <position position="233"/>
    </location>
    <ligand>
        <name>DNA</name>
        <dbReference type="ChEBI" id="CHEBI:16991"/>
    </ligand>
</feature>
<feature type="binding site" evidence="1">
    <location>
        <position position="233"/>
    </location>
    <ligand>
        <name>Mg(2+)</name>
        <dbReference type="ChEBI" id="CHEBI:18420"/>
        <label>2</label>
    </ligand>
</feature>
<comment type="function">
    <text evidence="1">Structure-specific nuclease with 5'-flap endonuclease and 5'-3' exonuclease activities involved in DNA replication and repair. During DNA replication, cleaves the 5'-overhanging flap structure that is generated by displacement synthesis when DNA polymerase encounters the 5'-end of a downstream Okazaki fragment. It enters the flap from the 5'-end and then tracks to cleave the flap base, leaving a nick for ligation. Also involved in the long patch base excision repair (LP-BER) pathway, by cleaving within the apurinic/apyrimidinic (AP) site-terminated flap. Acts as a genome stabilization factor that prevents flaps from equilibrating into structures that lead to duplications and deletions. Also possesses 5'-3' exonuclease activity on nicked or gapped double-stranded DNA, and exhibits RNase H activity. Also involved in replication and repair of rDNA and in repairing mitochondrial DNA.</text>
</comment>
<comment type="cofactor">
    <cofactor evidence="1">
        <name>Mg(2+)</name>
        <dbReference type="ChEBI" id="CHEBI:18420"/>
    </cofactor>
    <text evidence="1">Binds 2 magnesium ions per subunit. They probably participate in the reaction catalyzed by the enzyme. May bind an additional third magnesium ion after substrate binding.</text>
</comment>
<comment type="subunit">
    <text evidence="1">Interacts with PCNA. Three molecules of dnr-8/fen1 bind to one PCNA trimer with each molecule binding to one PCNA monomer. PCNA stimulates the nuclease activity without altering cleavage specificity.</text>
</comment>
<comment type="subcellular location">
    <subcellularLocation>
        <location evidence="1">Nucleus</location>
        <location evidence="1">Nucleolus</location>
    </subcellularLocation>
    <subcellularLocation>
        <location evidence="1">Nucleus</location>
        <location evidence="1">Nucleoplasm</location>
    </subcellularLocation>
    <subcellularLocation>
        <location evidence="1">Mitochondrion</location>
    </subcellularLocation>
    <text evidence="1">Resides mostly in the nucleoli and relocalizes to the nucleoplasm upon DNA damage.</text>
</comment>
<comment type="PTM">
    <text evidence="1">Phosphorylated. Phosphorylation upon DNA damage induces relocalization to the nuclear plasma.</text>
</comment>
<comment type="similarity">
    <text evidence="1">Belongs to the XPG/RAD2 endonuclease family. FEN1 subfamily.</text>
</comment>
<dbReference type="EC" id="3.1.-.-" evidence="1"/>
<dbReference type="EMBL" id="CM002242">
    <property type="protein sequence ID" value="EDO65264.2"/>
    <property type="molecule type" value="Genomic_DNA"/>
</dbReference>
<dbReference type="RefSeq" id="XP_001728355.2">
    <property type="nucleotide sequence ID" value="XM_001728303.2"/>
</dbReference>
<dbReference type="SMR" id="A7UW97"/>
<dbReference type="FunCoup" id="A7UW97">
    <property type="interactions" value="1013"/>
</dbReference>
<dbReference type="STRING" id="367110.A7UW97"/>
<dbReference type="PaxDb" id="5141-EFNCRP00000003056"/>
<dbReference type="EnsemblFungi" id="EDO65264">
    <property type="protein sequence ID" value="EDO65264"/>
    <property type="gene ID" value="NCU10776"/>
</dbReference>
<dbReference type="GeneID" id="5847646"/>
<dbReference type="KEGG" id="ncr:NCU10776"/>
<dbReference type="VEuPathDB" id="FungiDB:NCU10776"/>
<dbReference type="HOGENOM" id="CLU_032444_2_0_1"/>
<dbReference type="InParanoid" id="A7UW97"/>
<dbReference type="OrthoDB" id="1937206at2759"/>
<dbReference type="Proteomes" id="UP000001805">
    <property type="component" value="Chromosome 7, Linkage Group VII"/>
</dbReference>
<dbReference type="GO" id="GO:0005737">
    <property type="term" value="C:cytoplasm"/>
    <property type="evidence" value="ECO:0000318"/>
    <property type="project" value="GO_Central"/>
</dbReference>
<dbReference type="GO" id="GO:0005739">
    <property type="term" value="C:mitochondrion"/>
    <property type="evidence" value="ECO:0007669"/>
    <property type="project" value="UniProtKB-SubCell"/>
</dbReference>
<dbReference type="GO" id="GO:0005730">
    <property type="term" value="C:nucleolus"/>
    <property type="evidence" value="ECO:0007669"/>
    <property type="project" value="UniProtKB-SubCell"/>
</dbReference>
<dbReference type="GO" id="GO:0005654">
    <property type="term" value="C:nucleoplasm"/>
    <property type="evidence" value="ECO:0007669"/>
    <property type="project" value="UniProtKB-SubCell"/>
</dbReference>
<dbReference type="GO" id="GO:0005634">
    <property type="term" value="C:nucleus"/>
    <property type="evidence" value="ECO:0000318"/>
    <property type="project" value="GO_Central"/>
</dbReference>
<dbReference type="GO" id="GO:0008409">
    <property type="term" value="F:5'-3' exonuclease activity"/>
    <property type="evidence" value="ECO:0000318"/>
    <property type="project" value="GO_Central"/>
</dbReference>
<dbReference type="GO" id="GO:0017108">
    <property type="term" value="F:5'-flap endonuclease activity"/>
    <property type="evidence" value="ECO:0000318"/>
    <property type="project" value="GO_Central"/>
</dbReference>
<dbReference type="GO" id="GO:0003677">
    <property type="term" value="F:DNA binding"/>
    <property type="evidence" value="ECO:0007669"/>
    <property type="project" value="UniProtKB-UniRule"/>
</dbReference>
<dbReference type="GO" id="GO:0000287">
    <property type="term" value="F:magnesium ion binding"/>
    <property type="evidence" value="ECO:0007669"/>
    <property type="project" value="UniProtKB-UniRule"/>
</dbReference>
<dbReference type="GO" id="GO:0006284">
    <property type="term" value="P:base-excision repair"/>
    <property type="evidence" value="ECO:0007669"/>
    <property type="project" value="UniProtKB-UniRule"/>
</dbReference>
<dbReference type="GO" id="GO:0043137">
    <property type="term" value="P:DNA replication, removal of RNA primer"/>
    <property type="evidence" value="ECO:0007669"/>
    <property type="project" value="UniProtKB-UniRule"/>
</dbReference>
<dbReference type="CDD" id="cd09907">
    <property type="entry name" value="H3TH_FEN1-Euk"/>
    <property type="match status" value="1"/>
</dbReference>
<dbReference type="CDD" id="cd09867">
    <property type="entry name" value="PIN_FEN1"/>
    <property type="match status" value="1"/>
</dbReference>
<dbReference type="FunFam" id="1.10.150.20:FF:000009">
    <property type="entry name" value="Flap endonuclease 1"/>
    <property type="match status" value="1"/>
</dbReference>
<dbReference type="FunFam" id="3.40.50.1010:FF:000003">
    <property type="entry name" value="Flap endonuclease 1"/>
    <property type="match status" value="1"/>
</dbReference>
<dbReference type="Gene3D" id="1.10.150.20">
    <property type="entry name" value="5' to 3' exonuclease, C-terminal subdomain"/>
    <property type="match status" value="1"/>
</dbReference>
<dbReference type="Gene3D" id="3.40.50.1010">
    <property type="entry name" value="5'-nuclease"/>
    <property type="match status" value="1"/>
</dbReference>
<dbReference type="HAMAP" id="MF_00614">
    <property type="entry name" value="Fen"/>
    <property type="match status" value="1"/>
</dbReference>
<dbReference type="InterPro" id="IPR036279">
    <property type="entry name" value="5-3_exonuclease_C_sf"/>
</dbReference>
<dbReference type="InterPro" id="IPR023426">
    <property type="entry name" value="Flap_endonuc"/>
</dbReference>
<dbReference type="InterPro" id="IPR008918">
    <property type="entry name" value="HhH2"/>
</dbReference>
<dbReference type="InterPro" id="IPR029060">
    <property type="entry name" value="PIN-like_dom_sf"/>
</dbReference>
<dbReference type="InterPro" id="IPR006086">
    <property type="entry name" value="XPG-I_dom"/>
</dbReference>
<dbReference type="InterPro" id="IPR006084">
    <property type="entry name" value="XPG/Rad2"/>
</dbReference>
<dbReference type="InterPro" id="IPR019974">
    <property type="entry name" value="XPG_CS"/>
</dbReference>
<dbReference type="InterPro" id="IPR006085">
    <property type="entry name" value="XPG_DNA_repair_N"/>
</dbReference>
<dbReference type="PANTHER" id="PTHR11081:SF9">
    <property type="entry name" value="FLAP ENDONUCLEASE 1"/>
    <property type="match status" value="1"/>
</dbReference>
<dbReference type="PANTHER" id="PTHR11081">
    <property type="entry name" value="FLAP ENDONUCLEASE FAMILY MEMBER"/>
    <property type="match status" value="1"/>
</dbReference>
<dbReference type="Pfam" id="PF00867">
    <property type="entry name" value="XPG_I"/>
    <property type="match status" value="1"/>
</dbReference>
<dbReference type="Pfam" id="PF00752">
    <property type="entry name" value="XPG_N"/>
    <property type="match status" value="1"/>
</dbReference>
<dbReference type="PRINTS" id="PR00853">
    <property type="entry name" value="XPGRADSUPER"/>
</dbReference>
<dbReference type="SMART" id="SM00279">
    <property type="entry name" value="HhH2"/>
    <property type="match status" value="1"/>
</dbReference>
<dbReference type="SMART" id="SM00484">
    <property type="entry name" value="XPGI"/>
    <property type="match status" value="1"/>
</dbReference>
<dbReference type="SMART" id="SM00485">
    <property type="entry name" value="XPGN"/>
    <property type="match status" value="1"/>
</dbReference>
<dbReference type="SUPFAM" id="SSF47807">
    <property type="entry name" value="5' to 3' exonuclease, C-terminal subdomain"/>
    <property type="match status" value="1"/>
</dbReference>
<dbReference type="SUPFAM" id="SSF88723">
    <property type="entry name" value="PIN domain-like"/>
    <property type="match status" value="1"/>
</dbReference>
<dbReference type="PROSITE" id="PS00841">
    <property type="entry name" value="XPG_1"/>
    <property type="match status" value="1"/>
</dbReference>
<dbReference type="PROSITE" id="PS00842">
    <property type="entry name" value="XPG_2"/>
    <property type="match status" value="1"/>
</dbReference>
<accession>A7UW97</accession>